<accession>Q493Z9</accession>
<protein>
    <recommendedName>
        <fullName evidence="1">Valine--tRNA ligase</fullName>
        <ecNumber evidence="1">6.1.1.9</ecNumber>
    </recommendedName>
    <alternativeName>
        <fullName evidence="1">Valyl-tRNA synthetase</fullName>
        <shortName evidence="1">ValRS</shortName>
    </alternativeName>
</protein>
<proteinExistence type="inferred from homology"/>
<reference key="1">
    <citation type="journal article" date="2005" name="Genome Res.">
        <title>Genome sequence of Blochmannia pennsylvanicus indicates parallel evolutionary trends among bacterial mutualists of insects.</title>
        <authorList>
            <person name="Degnan P.H."/>
            <person name="Lazarus A.B."/>
            <person name="Wernegreen J.J."/>
        </authorList>
    </citation>
    <scope>NUCLEOTIDE SEQUENCE [LARGE SCALE GENOMIC DNA]</scope>
    <source>
        <strain>BPEN</strain>
    </source>
</reference>
<name>SYV_BLOPB</name>
<comment type="function">
    <text evidence="1">Catalyzes the attachment of valine to tRNA(Val). As ValRS can inadvertently accommodate and process structurally similar amino acids such as threonine, to avoid such errors, it has a 'posttransfer' editing activity that hydrolyzes mischarged Thr-tRNA(Val) in a tRNA-dependent manner.</text>
</comment>
<comment type="catalytic activity">
    <reaction evidence="1">
        <text>tRNA(Val) + L-valine + ATP = L-valyl-tRNA(Val) + AMP + diphosphate</text>
        <dbReference type="Rhea" id="RHEA:10704"/>
        <dbReference type="Rhea" id="RHEA-COMP:9672"/>
        <dbReference type="Rhea" id="RHEA-COMP:9708"/>
        <dbReference type="ChEBI" id="CHEBI:30616"/>
        <dbReference type="ChEBI" id="CHEBI:33019"/>
        <dbReference type="ChEBI" id="CHEBI:57762"/>
        <dbReference type="ChEBI" id="CHEBI:78442"/>
        <dbReference type="ChEBI" id="CHEBI:78537"/>
        <dbReference type="ChEBI" id="CHEBI:456215"/>
        <dbReference type="EC" id="6.1.1.9"/>
    </reaction>
</comment>
<comment type="subunit">
    <text evidence="1">Monomer.</text>
</comment>
<comment type="subcellular location">
    <subcellularLocation>
        <location evidence="1">Cytoplasm</location>
    </subcellularLocation>
</comment>
<comment type="domain">
    <text evidence="1">ValRS has two distinct active sites: one for aminoacylation and one for editing. The misactivated threonine is translocated from the active site to the editing site.</text>
</comment>
<comment type="domain">
    <text evidence="1">The C-terminal coiled-coil domain is crucial for aminoacylation activity.</text>
</comment>
<comment type="similarity">
    <text evidence="1">Belongs to the class-I aminoacyl-tRNA synthetase family. ValS type 1 subfamily.</text>
</comment>
<keyword id="KW-0030">Aminoacyl-tRNA synthetase</keyword>
<keyword id="KW-0067">ATP-binding</keyword>
<keyword id="KW-0175">Coiled coil</keyword>
<keyword id="KW-0963">Cytoplasm</keyword>
<keyword id="KW-0436">Ligase</keyword>
<keyword id="KW-0547">Nucleotide-binding</keyword>
<keyword id="KW-0648">Protein biosynthesis</keyword>
<keyword id="KW-1185">Reference proteome</keyword>
<organism>
    <name type="scientific">Blochmanniella pennsylvanica (strain BPEN)</name>
    <dbReference type="NCBI Taxonomy" id="291272"/>
    <lineage>
        <taxon>Bacteria</taxon>
        <taxon>Pseudomonadati</taxon>
        <taxon>Pseudomonadota</taxon>
        <taxon>Gammaproteobacteria</taxon>
        <taxon>Enterobacterales</taxon>
        <taxon>Enterobacteriaceae</taxon>
        <taxon>ant endosymbionts</taxon>
        <taxon>Candidatus Blochmanniella</taxon>
    </lineage>
</organism>
<evidence type="ECO:0000255" key="1">
    <source>
        <dbReference type="HAMAP-Rule" id="MF_02004"/>
    </source>
</evidence>
<sequence length="957" mass="112037">MSNYIVEKIYNPKNIEEPIYKFWEYGDYFSPHGNTSQESYCIMMPPPNITGQLHLGHAFQQTIMDVLIRYQRMQGKNTLWQTGTDHAGIATQMLVEHKIYNNTGKTRHDYTRDELIKNIWAWKSQSEQFITYQMKRLGNSVDWKRQRFTMDTEMSYAVTEAFIRLYRKNLIYRGKRLVNWDCKLQTAISDLEVINKKTKGSIWYIYYKLDNATISSNSHHLIVATTRPETMLGDTAVAVHPEDTRYKNYIGQYVIAPITNRRIPIISDKNVDMFKGTGCLKITPAHDFNDYIIGKRHGLPMINIFSLNGKILKKLEVFNSSGQLTDQLYCKIPQIFHNLDSDNARKKIISECNALKLLHNIEPHDLTIPYSDRTGTIIEPMLTDQWYIRVKHLTQHAIDAVNLNIINFVPKQYKNMYFSWMNNLQDWCISRQIWWGHKIPAWYDDNNTIYVGYCEKDIRIKNKLNNNVILHREKDVLDTWFSSSLWTFAALGWPKNTNLLNVFHPTNIIISGFDIIFFWIARMIMLTMHFIKNDNGSAQIPFKTVYITGLIRDELGQKMSKSKGNIIDPIDIIDGISIENLLKKRTKNMLQPQLSKHIINNTIKQFPNGIKPHGTDALRFTLVALASSGRDIHWDMQRLTGYRNFCNKLWHASRFVLMHTKNQDCGISININEKSFSLADRWIITKFHQTVQIFHKKLEIYRFDEIANILHEFIWHQFCDWYLELTKPILYHGNALELRGTRYTLITLLESLLRLTHPIIPFITEKIWQEVKTVTGNNGTTIMLQPFPKYDESVIDMKSVIDIEWIKNAVLAIRTARVNMNISYNIPLQIVFRDTSSEVKKRITENSKILCHIAQLKSIHFISKGTIYPKSMTMPLDSSELLIRIPDTFNKENEINRLKKESELINRKIETIQKLLDDNNFINQAPKSVIKDKQALLNYYELIQNKLIDQCAIMKKL</sequence>
<dbReference type="EC" id="6.1.1.9" evidence="1"/>
<dbReference type="EMBL" id="CP000016">
    <property type="protein sequence ID" value="AAZ40682.1"/>
    <property type="molecule type" value="Genomic_DNA"/>
</dbReference>
<dbReference type="SMR" id="Q493Z9"/>
<dbReference type="STRING" id="291272.BPEN_033"/>
<dbReference type="KEGG" id="bpn:BPEN_033"/>
<dbReference type="eggNOG" id="COG0525">
    <property type="taxonomic scope" value="Bacteria"/>
</dbReference>
<dbReference type="HOGENOM" id="CLU_001493_0_2_6"/>
<dbReference type="OrthoDB" id="9810365at2"/>
<dbReference type="Proteomes" id="UP000007794">
    <property type="component" value="Chromosome"/>
</dbReference>
<dbReference type="GO" id="GO:0005829">
    <property type="term" value="C:cytosol"/>
    <property type="evidence" value="ECO:0007669"/>
    <property type="project" value="TreeGrafter"/>
</dbReference>
<dbReference type="GO" id="GO:0002161">
    <property type="term" value="F:aminoacyl-tRNA deacylase activity"/>
    <property type="evidence" value="ECO:0007669"/>
    <property type="project" value="InterPro"/>
</dbReference>
<dbReference type="GO" id="GO:0005524">
    <property type="term" value="F:ATP binding"/>
    <property type="evidence" value="ECO:0007669"/>
    <property type="project" value="UniProtKB-UniRule"/>
</dbReference>
<dbReference type="GO" id="GO:0004832">
    <property type="term" value="F:valine-tRNA ligase activity"/>
    <property type="evidence" value="ECO:0007669"/>
    <property type="project" value="UniProtKB-UniRule"/>
</dbReference>
<dbReference type="GO" id="GO:0006438">
    <property type="term" value="P:valyl-tRNA aminoacylation"/>
    <property type="evidence" value="ECO:0007669"/>
    <property type="project" value="UniProtKB-UniRule"/>
</dbReference>
<dbReference type="CDD" id="cd07962">
    <property type="entry name" value="Anticodon_Ia_Val"/>
    <property type="match status" value="1"/>
</dbReference>
<dbReference type="CDD" id="cd00817">
    <property type="entry name" value="ValRS_core"/>
    <property type="match status" value="1"/>
</dbReference>
<dbReference type="FunFam" id="1.10.730.10:FF:000007">
    <property type="entry name" value="Valine--tRNA ligase"/>
    <property type="match status" value="1"/>
</dbReference>
<dbReference type="FunFam" id="3.40.50.620:FF:000032">
    <property type="entry name" value="Valine--tRNA ligase"/>
    <property type="match status" value="1"/>
</dbReference>
<dbReference type="FunFam" id="3.40.50.620:FF:000073">
    <property type="entry name" value="Valine--tRNA ligase"/>
    <property type="match status" value="1"/>
</dbReference>
<dbReference type="Gene3D" id="3.40.50.620">
    <property type="entry name" value="HUPs"/>
    <property type="match status" value="2"/>
</dbReference>
<dbReference type="Gene3D" id="1.10.730.10">
    <property type="entry name" value="Isoleucyl-tRNA Synthetase, Domain 1"/>
    <property type="match status" value="1"/>
</dbReference>
<dbReference type="Gene3D" id="1.10.287.380">
    <property type="entry name" value="Valyl-tRNA synthetase, C-terminal domain"/>
    <property type="match status" value="1"/>
</dbReference>
<dbReference type="HAMAP" id="MF_02004">
    <property type="entry name" value="Val_tRNA_synth_type1"/>
    <property type="match status" value="1"/>
</dbReference>
<dbReference type="InterPro" id="IPR001412">
    <property type="entry name" value="aa-tRNA-synth_I_CS"/>
</dbReference>
<dbReference type="InterPro" id="IPR002300">
    <property type="entry name" value="aa-tRNA-synth_Ia"/>
</dbReference>
<dbReference type="InterPro" id="IPR033705">
    <property type="entry name" value="Anticodon_Ia_Val"/>
</dbReference>
<dbReference type="InterPro" id="IPR013155">
    <property type="entry name" value="M/V/L/I-tRNA-synth_anticd-bd"/>
</dbReference>
<dbReference type="InterPro" id="IPR014729">
    <property type="entry name" value="Rossmann-like_a/b/a_fold"/>
</dbReference>
<dbReference type="InterPro" id="IPR010978">
    <property type="entry name" value="tRNA-bd_arm"/>
</dbReference>
<dbReference type="InterPro" id="IPR009080">
    <property type="entry name" value="tRNAsynth_Ia_anticodon-bd"/>
</dbReference>
<dbReference type="InterPro" id="IPR037118">
    <property type="entry name" value="Val-tRNA_synth_C_sf"/>
</dbReference>
<dbReference type="InterPro" id="IPR009008">
    <property type="entry name" value="Val/Leu/Ile-tRNA-synth_edit"/>
</dbReference>
<dbReference type="InterPro" id="IPR002303">
    <property type="entry name" value="Valyl-tRNA_ligase"/>
</dbReference>
<dbReference type="NCBIfam" id="NF004349">
    <property type="entry name" value="PRK05729.1"/>
    <property type="match status" value="1"/>
</dbReference>
<dbReference type="NCBIfam" id="TIGR00422">
    <property type="entry name" value="valS"/>
    <property type="match status" value="1"/>
</dbReference>
<dbReference type="PANTHER" id="PTHR11946:SF93">
    <property type="entry name" value="VALINE--TRNA LIGASE, CHLOROPLASTIC_MITOCHONDRIAL 2"/>
    <property type="match status" value="1"/>
</dbReference>
<dbReference type="PANTHER" id="PTHR11946">
    <property type="entry name" value="VALYL-TRNA SYNTHETASES"/>
    <property type="match status" value="1"/>
</dbReference>
<dbReference type="Pfam" id="PF08264">
    <property type="entry name" value="Anticodon_1"/>
    <property type="match status" value="1"/>
</dbReference>
<dbReference type="Pfam" id="PF00133">
    <property type="entry name" value="tRNA-synt_1"/>
    <property type="match status" value="1"/>
</dbReference>
<dbReference type="PRINTS" id="PR00986">
    <property type="entry name" value="TRNASYNTHVAL"/>
</dbReference>
<dbReference type="SUPFAM" id="SSF47323">
    <property type="entry name" value="Anticodon-binding domain of a subclass of class I aminoacyl-tRNA synthetases"/>
    <property type="match status" value="1"/>
</dbReference>
<dbReference type="SUPFAM" id="SSF52374">
    <property type="entry name" value="Nucleotidylyl transferase"/>
    <property type="match status" value="1"/>
</dbReference>
<dbReference type="SUPFAM" id="SSF46589">
    <property type="entry name" value="tRNA-binding arm"/>
    <property type="match status" value="1"/>
</dbReference>
<dbReference type="SUPFAM" id="SSF50677">
    <property type="entry name" value="ValRS/IleRS/LeuRS editing domain"/>
    <property type="match status" value="1"/>
</dbReference>
<dbReference type="PROSITE" id="PS00178">
    <property type="entry name" value="AA_TRNA_LIGASE_I"/>
    <property type="match status" value="1"/>
</dbReference>
<feature type="chain" id="PRO_0000224444" description="Valine--tRNA ligase">
    <location>
        <begin position="1"/>
        <end position="957"/>
    </location>
</feature>
<feature type="coiled-coil region" evidence="1">
    <location>
        <begin position="889"/>
        <end position="918"/>
    </location>
</feature>
<feature type="short sequence motif" description="'HIGH' region">
    <location>
        <begin position="47"/>
        <end position="57"/>
    </location>
</feature>
<feature type="short sequence motif" description="'KMSKS' region">
    <location>
        <begin position="558"/>
        <end position="562"/>
    </location>
</feature>
<feature type="binding site" evidence="1">
    <location>
        <position position="561"/>
    </location>
    <ligand>
        <name>ATP</name>
        <dbReference type="ChEBI" id="CHEBI:30616"/>
    </ligand>
</feature>
<gene>
    <name evidence="1" type="primary">valS</name>
    <name type="ordered locus">BPEN_033</name>
</gene>